<accession>O29224</accession>
<proteinExistence type="inferred from homology"/>
<gene>
    <name evidence="1" type="primary">cheD</name>
    <name type="ordered locus">AF_1038</name>
</gene>
<sequence>MGSEILVGIGEFRVAKGAVLKTIGLGSCVGIALYDPKLRLGGLAHVMLPQSGNGTKRSAKYADHAVEMMTEAMERLGSDRKRIVAKMAGGAQIFKHMTMDMLRIGDRNAEAIRTILRDYGIRIVSEDLGGDEGRTVYFFTNDGRMLVKYSRGGELWI</sequence>
<organism>
    <name type="scientific">Archaeoglobus fulgidus (strain ATCC 49558 / DSM 4304 / JCM 9628 / NBRC 100126 / VC-16)</name>
    <dbReference type="NCBI Taxonomy" id="224325"/>
    <lineage>
        <taxon>Archaea</taxon>
        <taxon>Methanobacteriati</taxon>
        <taxon>Methanobacteriota</taxon>
        <taxon>Archaeoglobi</taxon>
        <taxon>Archaeoglobales</taxon>
        <taxon>Archaeoglobaceae</taxon>
        <taxon>Archaeoglobus</taxon>
    </lineage>
</organism>
<comment type="function">
    <text evidence="1">Probably deamidates glutamine residues to glutamate on methyl-accepting chemotaxis receptors (MCPs), playing an important role in chemotaxis.</text>
</comment>
<comment type="catalytic activity">
    <reaction evidence="1">
        <text>L-glutaminyl-[protein] + H2O = L-glutamyl-[protein] + NH4(+)</text>
        <dbReference type="Rhea" id="RHEA:16441"/>
        <dbReference type="Rhea" id="RHEA-COMP:10207"/>
        <dbReference type="Rhea" id="RHEA-COMP:10208"/>
        <dbReference type="ChEBI" id="CHEBI:15377"/>
        <dbReference type="ChEBI" id="CHEBI:28938"/>
        <dbReference type="ChEBI" id="CHEBI:29973"/>
        <dbReference type="ChEBI" id="CHEBI:30011"/>
        <dbReference type="EC" id="3.5.1.44"/>
    </reaction>
</comment>
<comment type="similarity">
    <text evidence="1">Belongs to the CheD family.</text>
</comment>
<reference key="1">
    <citation type="journal article" date="1997" name="Nature">
        <title>The complete genome sequence of the hyperthermophilic, sulphate-reducing archaeon Archaeoglobus fulgidus.</title>
        <authorList>
            <person name="Klenk H.-P."/>
            <person name="Clayton R.A."/>
            <person name="Tomb J.-F."/>
            <person name="White O."/>
            <person name="Nelson K.E."/>
            <person name="Ketchum K.A."/>
            <person name="Dodson R.J."/>
            <person name="Gwinn M.L."/>
            <person name="Hickey E.K."/>
            <person name="Peterson J.D."/>
            <person name="Richardson D.L."/>
            <person name="Kerlavage A.R."/>
            <person name="Graham D.E."/>
            <person name="Kyrpides N.C."/>
            <person name="Fleischmann R.D."/>
            <person name="Quackenbush J."/>
            <person name="Lee N.H."/>
            <person name="Sutton G.G."/>
            <person name="Gill S.R."/>
            <person name="Kirkness E.F."/>
            <person name="Dougherty B.A."/>
            <person name="McKenney K."/>
            <person name="Adams M.D."/>
            <person name="Loftus B.J."/>
            <person name="Peterson S.N."/>
            <person name="Reich C.I."/>
            <person name="McNeil L.K."/>
            <person name="Badger J.H."/>
            <person name="Glodek A."/>
            <person name="Zhou L."/>
            <person name="Overbeek R."/>
            <person name="Gocayne J.D."/>
            <person name="Weidman J.F."/>
            <person name="McDonald L.A."/>
            <person name="Utterback T.R."/>
            <person name="Cotton M.D."/>
            <person name="Spriggs T."/>
            <person name="Artiach P."/>
            <person name="Kaine B.P."/>
            <person name="Sykes S.M."/>
            <person name="Sadow P.W."/>
            <person name="D'Andrea K.P."/>
            <person name="Bowman C."/>
            <person name="Fujii C."/>
            <person name="Garland S.A."/>
            <person name="Mason T.M."/>
            <person name="Olsen G.J."/>
            <person name="Fraser C.M."/>
            <person name="Smith H.O."/>
            <person name="Woese C.R."/>
            <person name="Venter J.C."/>
        </authorList>
    </citation>
    <scope>NUCLEOTIDE SEQUENCE [LARGE SCALE GENOMIC DNA]</scope>
    <source>
        <strain>ATCC 49558 / DSM 4304 / JCM 9628 / NBRC 100126 / VC-16</strain>
    </source>
</reference>
<protein>
    <recommendedName>
        <fullName evidence="1">Probable chemoreceptor glutamine deamidase CheD</fullName>
        <ecNumber evidence="1">3.5.1.44</ecNumber>
    </recommendedName>
</protein>
<keyword id="KW-0145">Chemotaxis</keyword>
<keyword id="KW-0378">Hydrolase</keyword>
<keyword id="KW-1185">Reference proteome</keyword>
<feature type="chain" id="PRO_0000251086" description="Probable chemoreceptor glutamine deamidase CheD">
    <location>
        <begin position="1"/>
        <end position="157"/>
    </location>
</feature>
<evidence type="ECO:0000255" key="1">
    <source>
        <dbReference type="HAMAP-Rule" id="MF_01440"/>
    </source>
</evidence>
<name>CHED_ARCFU</name>
<dbReference type="EC" id="3.5.1.44" evidence="1"/>
<dbReference type="EMBL" id="AE000782">
    <property type="protein sequence ID" value="AAB90202.1"/>
    <property type="molecule type" value="Genomic_DNA"/>
</dbReference>
<dbReference type="PIR" id="F69379">
    <property type="entry name" value="F69379"/>
</dbReference>
<dbReference type="RefSeq" id="WP_010878538.1">
    <property type="nucleotide sequence ID" value="NC_000917.1"/>
</dbReference>
<dbReference type="SMR" id="O29224"/>
<dbReference type="STRING" id="224325.AF_1038"/>
<dbReference type="PaxDb" id="224325-AF_1038"/>
<dbReference type="EnsemblBacteria" id="AAB90202">
    <property type="protein sequence ID" value="AAB90202"/>
    <property type="gene ID" value="AF_1038"/>
</dbReference>
<dbReference type="GeneID" id="1484261"/>
<dbReference type="KEGG" id="afu:AF_1038"/>
<dbReference type="eggNOG" id="arCOG02380">
    <property type="taxonomic scope" value="Archaea"/>
</dbReference>
<dbReference type="HOGENOM" id="CLU_087854_2_0_2"/>
<dbReference type="OrthoDB" id="10499at2157"/>
<dbReference type="PhylomeDB" id="O29224"/>
<dbReference type="Proteomes" id="UP000002199">
    <property type="component" value="Chromosome"/>
</dbReference>
<dbReference type="GO" id="GO:0050568">
    <property type="term" value="F:protein-glutamine glutaminase activity"/>
    <property type="evidence" value="ECO:0007669"/>
    <property type="project" value="UniProtKB-UniRule"/>
</dbReference>
<dbReference type="GO" id="GO:0006935">
    <property type="term" value="P:chemotaxis"/>
    <property type="evidence" value="ECO:0007669"/>
    <property type="project" value="UniProtKB-UniRule"/>
</dbReference>
<dbReference type="CDD" id="cd16352">
    <property type="entry name" value="CheD"/>
    <property type="match status" value="1"/>
</dbReference>
<dbReference type="Gene3D" id="3.30.1330.200">
    <property type="match status" value="1"/>
</dbReference>
<dbReference type="HAMAP" id="MF_01440">
    <property type="entry name" value="CheD"/>
    <property type="match status" value="1"/>
</dbReference>
<dbReference type="InterPro" id="IPR038592">
    <property type="entry name" value="CheD-like_sf"/>
</dbReference>
<dbReference type="InterPro" id="IPR005659">
    <property type="entry name" value="Chemorcpt_Glu_NH3ase_CheD"/>
</dbReference>
<dbReference type="InterPro" id="IPR011324">
    <property type="entry name" value="Cytotoxic_necrot_fac-like_cat"/>
</dbReference>
<dbReference type="PANTHER" id="PTHR35147">
    <property type="entry name" value="CHEMORECEPTOR GLUTAMINE DEAMIDASE CHED-RELATED"/>
    <property type="match status" value="1"/>
</dbReference>
<dbReference type="PANTHER" id="PTHR35147:SF1">
    <property type="entry name" value="CHEMORECEPTOR GLUTAMINE DEAMIDASE CHED-RELATED"/>
    <property type="match status" value="1"/>
</dbReference>
<dbReference type="Pfam" id="PF03975">
    <property type="entry name" value="CheD"/>
    <property type="match status" value="1"/>
</dbReference>
<dbReference type="SUPFAM" id="SSF64438">
    <property type="entry name" value="CNF1/YfiH-like putative cysteine hydrolases"/>
    <property type="match status" value="1"/>
</dbReference>